<proteinExistence type="evidence at protein level"/>
<dbReference type="EMBL" id="FC628321">
    <property type="status" value="NOT_ANNOTATED_CDS"/>
    <property type="molecule type" value="mRNA"/>
</dbReference>
<dbReference type="RefSeq" id="XP_009052113.1">
    <property type="nucleotide sequence ID" value="XM_009053865.1"/>
</dbReference>
<dbReference type="EnsemblMetazoa" id="LotgiT239170">
    <property type="protein sequence ID" value="LotgiP239170"/>
    <property type="gene ID" value="LotgiG239170"/>
</dbReference>
<dbReference type="GeneID" id="20250984"/>
<dbReference type="KEGG" id="lgi:LOTGIDRAFT_239170"/>
<dbReference type="CTD" id="20250984"/>
<dbReference type="HOGENOM" id="CLU_1789041_0_0_1"/>
<dbReference type="GO" id="GO:0005576">
    <property type="term" value="C:extracellular region"/>
    <property type="evidence" value="ECO:0007669"/>
    <property type="project" value="UniProtKB-SubCell"/>
</dbReference>
<sequence>MKLTLAVVVVFAYIATTNAINPAILAAMTGGGGGNFKQMLLMDALFKNQNIGGGGGGGGGVLGGGQSQFAKMIMTKMLLKQFGENPLAAMTLMGNQNIDPMTLIALSGGENMQAIIPIIMRQQMQQQMRSQMPPVGALGTQMTPM</sequence>
<comment type="subcellular location">
    <subcellularLocation>
        <location evidence="2">Secreted</location>
    </subcellularLocation>
</comment>
<comment type="tissue specificity">
    <text evidence="2">Component of the acid-insoluble and acid-soluble organic matrix of calcified layers of the shell (at protein level).</text>
</comment>
<organism>
    <name type="scientific">Lottia gigantea</name>
    <name type="common">Giant owl limpet</name>
    <dbReference type="NCBI Taxonomy" id="225164"/>
    <lineage>
        <taxon>Eukaryota</taxon>
        <taxon>Metazoa</taxon>
        <taxon>Spiralia</taxon>
        <taxon>Lophotrochozoa</taxon>
        <taxon>Mollusca</taxon>
        <taxon>Gastropoda</taxon>
        <taxon>Patellogastropoda</taxon>
        <taxon>Lottioidea</taxon>
        <taxon>Lottiidae</taxon>
        <taxon>Lottia</taxon>
    </lineage>
</organism>
<feature type="signal peptide" evidence="1">
    <location>
        <begin position="1"/>
        <end position="19"/>
    </location>
</feature>
<feature type="chain" id="PRO_0000415248" description="Glycine-rich protein" evidence="1">
    <location>
        <begin position="20"/>
        <end position="145"/>
    </location>
</feature>
<protein>
    <recommendedName>
        <fullName>Glycine-rich protein</fullName>
    </recommendedName>
    <alternativeName>
        <fullName>Uncharacterized shell protein 12</fullName>
        <shortName>LUSP-12</shortName>
    </alternativeName>
</protein>
<keyword id="KW-0903">Direct protein sequencing</keyword>
<keyword id="KW-0964">Secreted</keyword>
<keyword id="KW-0732">Signal</keyword>
<evidence type="ECO:0000255" key="1"/>
<evidence type="ECO:0000269" key="2">
    <source>
    </source>
</evidence>
<evidence type="ECO:0000269" key="3">
    <source ref="1"/>
</evidence>
<evidence type="ECO:0000305" key="4"/>
<name>GRP_LOTGI</name>
<reference evidence="4" key="1">
    <citation type="submission" date="2007-12" db="EMBL/GenBank/DDBJ databases">
        <title>DOE Joint Genome Institute Lottia gigantea EST project.</title>
        <authorList>
            <person name="Richardson P."/>
            <person name="Lucas S."/>
            <person name="Rokhsar D."/>
            <person name="Wang M."/>
            <person name="Lindquist E.A."/>
        </authorList>
    </citation>
    <scope>NUCLEOTIDE SEQUENCE [LARGE SCALE MRNA]</scope>
    <scope>IDENTIFICATION</scope>
    <source>
        <tissue evidence="3">Mantle</tissue>
    </source>
</reference>
<reference key="2">
    <citation type="journal article" date="2013" name="FEBS J.">
        <title>The shell-forming proteome of Lottia gigantea reveals both deep conservations and lineage-specific novelties.</title>
        <authorList>
            <person name="Marie B."/>
            <person name="Jackson D.J."/>
            <person name="Ramos-Silva P."/>
            <person name="Zanella-Cleon I."/>
            <person name="Guichard N."/>
            <person name="Marin F."/>
        </authorList>
    </citation>
    <scope>PROTEIN SEQUENCE OF 38-71; 81-121 AND 130-145</scope>
    <scope>SUBCELLULAR LOCATION</scope>
    <scope>TISSUE SPECIFICITY</scope>
    <source>
        <tissue>Shell</tissue>
    </source>
</reference>
<accession>B3A0R2</accession>